<dbReference type="EMBL" id="DP000011">
    <property type="protein sequence ID" value="ABA99145.1"/>
    <property type="status" value="ALT_SEQ"/>
    <property type="molecule type" value="Genomic_DNA"/>
</dbReference>
<dbReference type="EMBL" id="AP008218">
    <property type="protein sequence ID" value="BAF30186.2"/>
    <property type="status" value="ALT_SEQ"/>
    <property type="molecule type" value="Genomic_DNA"/>
</dbReference>
<dbReference type="EMBL" id="AP014968">
    <property type="protein sequence ID" value="BAT17878.1"/>
    <property type="status" value="ALT_SEQ"/>
    <property type="molecule type" value="Genomic_DNA"/>
</dbReference>
<dbReference type="EMBL" id="CM000149">
    <property type="protein sequence ID" value="EEE53520.1"/>
    <property type="molecule type" value="Genomic_DNA"/>
</dbReference>
<dbReference type="SMR" id="B9GE13"/>
<dbReference type="FunCoup" id="B9GE13">
    <property type="interactions" value="102"/>
</dbReference>
<dbReference type="STRING" id="39947.B9GE13"/>
<dbReference type="PaxDb" id="39947-B9GE13"/>
<dbReference type="KEGG" id="dosa:Os12g0590500"/>
<dbReference type="eggNOG" id="ENOG502QR1R">
    <property type="taxonomic scope" value="Eukaryota"/>
</dbReference>
<dbReference type="HOGENOM" id="CLU_000399_0_0_1"/>
<dbReference type="InParanoid" id="B9GE13"/>
<dbReference type="Proteomes" id="UP000000763">
    <property type="component" value="Chromosome 12"/>
</dbReference>
<dbReference type="Proteomes" id="UP000007752">
    <property type="component" value="Chromosome 12"/>
</dbReference>
<dbReference type="Proteomes" id="UP000059680">
    <property type="component" value="Chromosome 12"/>
</dbReference>
<dbReference type="GO" id="GO:0032153">
    <property type="term" value="C:cell division site"/>
    <property type="evidence" value="ECO:0000318"/>
    <property type="project" value="GO_Central"/>
</dbReference>
<dbReference type="GO" id="GO:0005874">
    <property type="term" value="C:microtubule"/>
    <property type="evidence" value="ECO:0007669"/>
    <property type="project" value="UniProtKB-KW"/>
</dbReference>
<dbReference type="GO" id="GO:0005524">
    <property type="term" value="F:ATP binding"/>
    <property type="evidence" value="ECO:0007669"/>
    <property type="project" value="UniProtKB-KW"/>
</dbReference>
<dbReference type="GO" id="GO:0008017">
    <property type="term" value="F:microtubule binding"/>
    <property type="evidence" value="ECO:0007669"/>
    <property type="project" value="InterPro"/>
</dbReference>
<dbReference type="GO" id="GO:0003777">
    <property type="term" value="F:microtubule motor activity"/>
    <property type="evidence" value="ECO:0007669"/>
    <property type="project" value="InterPro"/>
</dbReference>
<dbReference type="GO" id="GO:0007018">
    <property type="term" value="P:microtubule-based movement"/>
    <property type="evidence" value="ECO:0007669"/>
    <property type="project" value="InterPro"/>
</dbReference>
<dbReference type="GO" id="GO:0000281">
    <property type="term" value="P:mitotic cytokinesis"/>
    <property type="evidence" value="ECO:0000318"/>
    <property type="project" value="GO_Central"/>
</dbReference>
<dbReference type="CDD" id="cd01373">
    <property type="entry name" value="KISc_KLP2_like"/>
    <property type="match status" value="1"/>
</dbReference>
<dbReference type="FunFam" id="3.40.850.10:FF:000033">
    <property type="entry name" value="Kinesin-like protein KIN-12E"/>
    <property type="match status" value="1"/>
</dbReference>
<dbReference type="Gene3D" id="3.40.850.10">
    <property type="entry name" value="Kinesin motor domain"/>
    <property type="match status" value="1"/>
</dbReference>
<dbReference type="InterPro" id="IPR044986">
    <property type="entry name" value="KIF15/KIN-12"/>
</dbReference>
<dbReference type="InterPro" id="IPR019821">
    <property type="entry name" value="Kinesin_motor_CS"/>
</dbReference>
<dbReference type="InterPro" id="IPR001752">
    <property type="entry name" value="Kinesin_motor_dom"/>
</dbReference>
<dbReference type="InterPro" id="IPR036961">
    <property type="entry name" value="Kinesin_motor_dom_sf"/>
</dbReference>
<dbReference type="InterPro" id="IPR027417">
    <property type="entry name" value="P-loop_NTPase"/>
</dbReference>
<dbReference type="PANTHER" id="PTHR37739">
    <property type="entry name" value="KINESIN-LIKE PROTEIN KIN-12D"/>
    <property type="match status" value="1"/>
</dbReference>
<dbReference type="PANTHER" id="PTHR37739:SF8">
    <property type="entry name" value="KINESIN-LIKE PROTEIN KIN-12D"/>
    <property type="match status" value="1"/>
</dbReference>
<dbReference type="Pfam" id="PF00225">
    <property type="entry name" value="Kinesin"/>
    <property type="match status" value="1"/>
</dbReference>
<dbReference type="PRINTS" id="PR00380">
    <property type="entry name" value="KINESINHEAVY"/>
</dbReference>
<dbReference type="SMART" id="SM00129">
    <property type="entry name" value="KISc"/>
    <property type="match status" value="1"/>
</dbReference>
<dbReference type="SUPFAM" id="SSF52540">
    <property type="entry name" value="P-loop containing nucleoside triphosphate hydrolases"/>
    <property type="match status" value="1"/>
</dbReference>
<dbReference type="PROSITE" id="PS00411">
    <property type="entry name" value="KINESIN_MOTOR_1"/>
    <property type="match status" value="1"/>
</dbReference>
<dbReference type="PROSITE" id="PS50067">
    <property type="entry name" value="KINESIN_MOTOR_2"/>
    <property type="match status" value="1"/>
</dbReference>
<comment type="similarity">
    <text evidence="4">Belongs to the TRAFAC class myosin-kinesin ATPase superfamily. Kinesin family. KIN-12 subfamily.</text>
</comment>
<comment type="sequence caution" evidence="5">
    <conflict type="erroneous gene model prediction">
        <sequence resource="EMBL-CDS" id="ABA99145"/>
    </conflict>
</comment>
<comment type="sequence caution" evidence="5">
    <conflict type="erroneous gene model prediction">
        <sequence resource="EMBL-CDS" id="BAF30186"/>
    </conflict>
</comment>
<comment type="sequence caution" evidence="5">
    <conflict type="erroneous gene model prediction">
        <sequence resource="EMBL-CDS" id="BAT17878"/>
    </conflict>
</comment>
<protein>
    <recommendedName>
        <fullName evidence="5">Kinesin-like protein KIN-12F</fullName>
    </recommendedName>
</protein>
<evidence type="ECO:0000255" key="1"/>
<evidence type="ECO:0000255" key="2">
    <source>
        <dbReference type="PROSITE-ProRule" id="PRU00283"/>
    </source>
</evidence>
<evidence type="ECO:0000256" key="3">
    <source>
        <dbReference type="SAM" id="MobiDB-lite"/>
    </source>
</evidence>
<evidence type="ECO:0000303" key="4">
    <source>
    </source>
</evidence>
<evidence type="ECO:0000305" key="5"/>
<evidence type="ECO:0000312" key="6">
    <source>
        <dbReference type="EMBL" id="ABA99145.1"/>
    </source>
</evidence>
<evidence type="ECO:0000312" key="7">
    <source>
        <dbReference type="EMBL" id="BAT17878.1"/>
    </source>
</evidence>
<evidence type="ECO:0000312" key="8">
    <source>
        <dbReference type="EMBL" id="EEE53520.1"/>
    </source>
</evidence>
<reference key="1">
    <citation type="journal article" date="2005" name="BMC Biol.">
        <title>The sequence of rice chromosomes 11 and 12, rich in disease resistance genes and recent gene duplications.</title>
        <authorList>
            <consortium name="The rice chromosomes 11 and 12 sequencing consortia"/>
        </authorList>
    </citation>
    <scope>NUCLEOTIDE SEQUENCE [LARGE SCALE GENOMIC DNA]</scope>
    <source>
        <strain>cv. Nipponbare</strain>
    </source>
</reference>
<reference key="2">
    <citation type="journal article" date="2005" name="Nature">
        <title>The map-based sequence of the rice genome.</title>
        <authorList>
            <consortium name="International rice genome sequencing project (IRGSP)"/>
        </authorList>
    </citation>
    <scope>NUCLEOTIDE SEQUENCE [LARGE SCALE GENOMIC DNA]</scope>
    <source>
        <strain>cv. Nipponbare</strain>
    </source>
</reference>
<reference key="3">
    <citation type="journal article" date="2008" name="Nucleic Acids Res.">
        <title>The rice annotation project database (RAP-DB): 2008 update.</title>
        <authorList>
            <consortium name="The rice annotation project (RAP)"/>
        </authorList>
    </citation>
    <scope>GENOME REANNOTATION</scope>
    <source>
        <strain>cv. Nipponbare</strain>
    </source>
</reference>
<reference key="4">
    <citation type="journal article" date="2013" name="Rice">
        <title>Improvement of the Oryza sativa Nipponbare reference genome using next generation sequence and optical map data.</title>
        <authorList>
            <person name="Kawahara Y."/>
            <person name="de la Bastide M."/>
            <person name="Hamilton J.P."/>
            <person name="Kanamori H."/>
            <person name="McCombie W.R."/>
            <person name="Ouyang S."/>
            <person name="Schwartz D.C."/>
            <person name="Tanaka T."/>
            <person name="Wu J."/>
            <person name="Zhou S."/>
            <person name="Childs K.L."/>
            <person name="Davidson R.M."/>
            <person name="Lin H."/>
            <person name="Quesada-Ocampo L."/>
            <person name="Vaillancourt B."/>
            <person name="Sakai H."/>
            <person name="Lee S.S."/>
            <person name="Kim J."/>
            <person name="Numa H."/>
            <person name="Itoh T."/>
            <person name="Buell C.R."/>
            <person name="Matsumoto T."/>
        </authorList>
    </citation>
    <scope>GENOME REANNOTATION</scope>
    <source>
        <strain>cv. Nipponbare</strain>
    </source>
</reference>
<reference key="5">
    <citation type="journal article" date="2005" name="PLoS Biol.">
        <title>The genomes of Oryza sativa: a history of duplications.</title>
        <authorList>
            <person name="Yu J."/>
            <person name="Wang J."/>
            <person name="Lin W."/>
            <person name="Li S."/>
            <person name="Li H."/>
            <person name="Zhou J."/>
            <person name="Ni P."/>
            <person name="Dong W."/>
            <person name="Hu S."/>
            <person name="Zeng C."/>
            <person name="Zhang J."/>
            <person name="Zhang Y."/>
            <person name="Li R."/>
            <person name="Xu Z."/>
            <person name="Li S."/>
            <person name="Li X."/>
            <person name="Zheng H."/>
            <person name="Cong L."/>
            <person name="Lin L."/>
            <person name="Yin J."/>
            <person name="Geng J."/>
            <person name="Li G."/>
            <person name="Shi J."/>
            <person name="Liu J."/>
            <person name="Lv H."/>
            <person name="Li J."/>
            <person name="Wang J."/>
            <person name="Deng Y."/>
            <person name="Ran L."/>
            <person name="Shi X."/>
            <person name="Wang X."/>
            <person name="Wu Q."/>
            <person name="Li C."/>
            <person name="Ren X."/>
            <person name="Wang J."/>
            <person name="Wang X."/>
            <person name="Li D."/>
            <person name="Liu D."/>
            <person name="Zhang X."/>
            <person name="Ji Z."/>
            <person name="Zhao W."/>
            <person name="Sun Y."/>
            <person name="Zhang Z."/>
            <person name="Bao J."/>
            <person name="Han Y."/>
            <person name="Dong L."/>
            <person name="Ji J."/>
            <person name="Chen P."/>
            <person name="Wu S."/>
            <person name="Liu J."/>
            <person name="Xiao Y."/>
            <person name="Bu D."/>
            <person name="Tan J."/>
            <person name="Yang L."/>
            <person name="Ye C."/>
            <person name="Zhang J."/>
            <person name="Xu J."/>
            <person name="Zhou Y."/>
            <person name="Yu Y."/>
            <person name="Zhang B."/>
            <person name="Zhuang S."/>
            <person name="Wei H."/>
            <person name="Liu B."/>
            <person name="Lei M."/>
            <person name="Yu H."/>
            <person name="Li Y."/>
            <person name="Xu H."/>
            <person name="Wei S."/>
            <person name="He X."/>
            <person name="Fang L."/>
            <person name="Zhang Z."/>
            <person name="Zhang Y."/>
            <person name="Huang X."/>
            <person name="Su Z."/>
            <person name="Tong W."/>
            <person name="Li J."/>
            <person name="Tong Z."/>
            <person name="Li S."/>
            <person name="Ye J."/>
            <person name="Wang L."/>
            <person name="Fang L."/>
            <person name="Lei T."/>
            <person name="Chen C.-S."/>
            <person name="Chen H.-C."/>
            <person name="Xu Z."/>
            <person name="Li H."/>
            <person name="Huang H."/>
            <person name="Zhang F."/>
            <person name="Xu H."/>
            <person name="Li N."/>
            <person name="Zhao C."/>
            <person name="Li S."/>
            <person name="Dong L."/>
            <person name="Huang Y."/>
            <person name="Li L."/>
            <person name="Xi Y."/>
            <person name="Qi Q."/>
            <person name="Li W."/>
            <person name="Zhang B."/>
            <person name="Hu W."/>
            <person name="Zhang Y."/>
            <person name="Tian X."/>
            <person name="Jiao Y."/>
            <person name="Liang X."/>
            <person name="Jin J."/>
            <person name="Gao L."/>
            <person name="Zheng W."/>
            <person name="Hao B."/>
            <person name="Liu S.-M."/>
            <person name="Wang W."/>
            <person name="Yuan L."/>
            <person name="Cao M."/>
            <person name="McDermott J."/>
            <person name="Samudrala R."/>
            <person name="Wang J."/>
            <person name="Wong G.K.-S."/>
            <person name="Yang H."/>
        </authorList>
    </citation>
    <scope>NUCLEOTIDE SEQUENCE [LARGE SCALE GENOMIC DNA]</scope>
    <source>
        <strain>cv. Nipponbare</strain>
    </source>
</reference>
<reference key="6">
    <citation type="journal article" date="2009" name="Ann. Bot.">
        <title>Evaluating the microtubule cytoskeleton and its interacting proteins in monocots by mining the rice genome.</title>
        <authorList>
            <person name="Guo L."/>
            <person name="Ho C.M."/>
            <person name="Kong Z."/>
            <person name="Lee Y.R."/>
            <person name="Qian Q."/>
            <person name="Liu B."/>
        </authorList>
    </citation>
    <scope>GENE FAMILY</scope>
    <scope>NOMENCLATURE</scope>
</reference>
<sequence>MVRDLAAVRRTPARASTSSSASEVGNDENAPVDASDAAVVEPEAAAARPPLLAIQPPQSGLKRKPESPAPTPSKLPFRTPEKAAARSRFGWVPPRGEEQPPPRVGGTPYSAVSTPGRHRGKSSAAAASEGGGGSTQSTPTKSVTKPAYSIGMSASRPPMSSGQRGAGLGLGFSMAARGTPMSFAPVTVVNTAEVPHFELREDPSFWMENNVQVVIRVRPLNNTERNLHNYNRCLKQESAQSITWIGQPESRFTFDHVACEAVNQEVLFRVAGLPMVENCMAGYNSCIFAYGQTGSGKTYTMLGEISELEVRPSQDRGMTPRIFEFLFARIRAEEESRRDEKLKYNCKCSFLEIYNEQITDLLDPSSTNLPLREDIRNGVYVENLTELEVGCVSDIIKLLMQGSANRKVAATNMNRESSRSHSVFTCIIESRWEKDSASNLRFARLNLVDLAGSERQRTSGAAGERLKEAANINKSLSTLGLVIMSLVDQAHGKQRHVPYRDSRLTFLLQDSLGGNSKTMIIANVSPSVCSASETLSTLKFAQRARLIQNNAVVNEDASGDVLALQHQIRLLKEELAVLKRQRVPRSLSFTSDIFERSGVDVDDGTESMNMDEENDNDAHDRRSLQDLRISNKQLRLLEETLAGAFRRESVAEATVKQLEAEIEQLNRMVYERENDTRSAKMTLKFREDKIHQMEALVRDKLPAESYLLEENNTLLKEIDLLRAKIDKNPEVTRFALENIRLSNKLKSYNQFCNEGEREHLLNEVSILRNQVLQILERRAEAEQPNNFPTNFELKRTSQELETCRGELQACLEANKKLAREIADLQNELSNIHSSNREGHPNVVEKFSSALNQYDSHAPEKKDQCFQEGFMINTDDILNLQLELDIIKTILAEERTTRAEVEKRITCLDDELKAANIHILQTCRQSETMQRELSDARSVIEALESQQIMLINELDELKESNQQSLEHLKKRDLEISRLNNELDVHRRQEFLAMEEPKVQLLKCFENDDSPLQTKLKRMQASLEKARKLNTRYQRDQASHSSAQQEMDEVSRQVEVETAEVIMCLQEELISLQQQLDASSKNELLANQRIDEARLEREQLNDRLLEVMKENECFSALIEEKDKKIGMLTNDWDKLASDIGNFLLDGNAALDEASDQVAFISESISQRKWIEDQVQKMCRGISQRDELLKELQSRLKEADDIRCDLDLKLRSLRGAMQAINDTHQQEKNDQENAMSVLRSQESNERYVNQQQLQELQRIQLLLDESIESFVQKEVIEQSYISLQRAMEEVIHHLESQLDQSKRDLTQLLSETQDKEQAFERLKNEENGVLLTVLSDVLKAKGVIHEFETGFNAIQSSFSVDPEEVVCQNSDLNLEDRVGCDPTGAFEAGEKHNGDVLCKLSKEMECVVYTMQMLQSQMVKLLQEKENAKEYHFQSQRTIKDVSAKVLQLKSEIIDKEKGYEARLKELEIKMQEKEKDTAESFISWNKEREALELEVSEAKSLAIQKSFEASTLISKFEEAQATISDADTTVNALVEANEKAKLQIQNFKENEALFLSEKERLLTEISSLKMLLDVKDQTYEVMEKKFAASLLEANDLALELEDGIRHLQNLLLEKLEFVSSDVEWMKSKLQQFAELARTWLEENWLEIIGKDCAVSVLHLCHMGILLERITGLNAENGFLQRGLCESNSLISKLREHNDRAKNELEMCSVLKGKLLLDINHNFSRIAKKEQEATELNSRLDAFEKKILHLQAQEEAMLARSNSMYNELSILVEEIDATNKSALATESKEKEELRHQLDEALLCNAMLKDIIQEDVDLPQVNNYMKGCSEFELCNRLADYHNELVTTNIIAKDIESFVLSSELVQQKAQLQKQELMFIDALDGLTTEATLSRVDKDLGSAVIFSLLDDSNKIMIDFDNLKQNKDELMENLHVLSEENLNLRSVVGSLESSIESLQTELDGKTKALMELQYSHTTILEEFKLKSKATELGVSRENDLRSENNLLKHEYLDIVRKEQMMAELVANLDSEKLFVTIQGRLEQVADQVQMYTSDQLNMVTKVSNEIDFIQMSIEGLITHNGFLQSELIRKDELAKGLSFDLSLLQESASVAKDQADELIQLTEAIESLEPELDSKSNELVDAVSGRQLLEAQILKSNQKVSALEEQLASKINELKEVSVEKDELTSKLNHIEGISYTMEDELADKSKAIERLEEELIELRSLLDARTCFLQNLQNDFSKLLDEKKYCETQVLILNEKLEMAQALAEESEAIATEAKQMAEERKTHAEEKDEEVKLLERSIEELETTVCALENKVDIIKEEAERQRMHREEIELELQKVRQQMLAVPSSGQATSSLEGGMGDFTDSSRHSREIKNELLAAQENIRILQKDVAEKETEIAQCKAHISELNIHAEAAAREYKQKFMELEAMAQQVKSDNTSANACSTRPEKISLKPRGSGSPFKCIGLGFVQQMNSEKDEELSAAKQRIMELEGIAASRQREIFMLNARLATTESMTHDVIRDMLGVKMNMATWAALVDNQQQMDTQESAVTQAHESKEQSDELMKLRSQLDELIEERQSWLDEINQRQSELGAARITIEKLRQKEHFMVAEIELLKAENANGKAIIFNLEDEVKKLTRQQNLQLRINHHEENNLLKKQNEELSAKLQKLGAVVARTKEELARYRVSDGKDPYEQMEEEELLRNRLEESEQDRSKLAENLSSLCATVLKIAGVRNHESDASLLKALEALNQIQLRIASMEAGVEDLKLKCKLLHEKARLSELRSESSSLSSGRSRSPSVCRSPSISSFR</sequence>
<name>KN12F_ORYSJ</name>
<feature type="chain" id="PRO_5004214227" description="Kinesin-like protein KIN-12F">
    <location>
        <begin position="1"/>
        <end position="2798"/>
    </location>
</feature>
<feature type="domain" description="Kinesin motor" evidence="2">
    <location>
        <begin position="210"/>
        <end position="547"/>
    </location>
</feature>
<feature type="region of interest" description="Disordered" evidence="3">
    <location>
        <begin position="1"/>
        <end position="165"/>
    </location>
</feature>
<feature type="region of interest" description="Disordered" evidence="3">
    <location>
        <begin position="600"/>
        <end position="621"/>
    </location>
</feature>
<feature type="region of interest" description="Disordered" evidence="3">
    <location>
        <begin position="2338"/>
        <end position="2359"/>
    </location>
</feature>
<feature type="region of interest" description="Disordered" evidence="3">
    <location>
        <begin position="2772"/>
        <end position="2798"/>
    </location>
</feature>
<feature type="coiled-coil region" evidence="1">
    <location>
        <begin position="792"/>
        <end position="835"/>
    </location>
</feature>
<feature type="coiled-coil region" evidence="1">
    <location>
        <begin position="890"/>
        <end position="987"/>
    </location>
</feature>
<feature type="coiled-coil region" evidence="1">
    <location>
        <begin position="1014"/>
        <end position="1108"/>
    </location>
</feature>
<feature type="coiled-coil region" evidence="1">
    <location>
        <begin position="1281"/>
        <end position="1322"/>
    </location>
</feature>
<feature type="coiled-coil region" evidence="1">
    <location>
        <begin position="2130"/>
        <end position="2333"/>
    </location>
</feature>
<feature type="coiled-coil region" evidence="1">
    <location>
        <begin position="2361"/>
        <end position="2427"/>
    </location>
</feature>
<feature type="coiled-coil region" evidence="1">
    <location>
        <begin position="2545"/>
        <end position="2758"/>
    </location>
</feature>
<feature type="compositionally biased region" description="Low complexity" evidence="3">
    <location>
        <begin position="8"/>
        <end position="22"/>
    </location>
</feature>
<feature type="compositionally biased region" description="Low complexity" evidence="3">
    <location>
        <begin position="31"/>
        <end position="58"/>
    </location>
</feature>
<feature type="compositionally biased region" description="Acidic residues" evidence="3">
    <location>
        <begin position="600"/>
        <end position="615"/>
    </location>
</feature>
<feature type="compositionally biased region" description="Low complexity" evidence="3">
    <location>
        <begin position="2774"/>
        <end position="2798"/>
    </location>
</feature>
<feature type="binding site" evidence="2">
    <location>
        <begin position="291"/>
        <end position="298"/>
    </location>
    <ligand>
        <name>ATP</name>
        <dbReference type="ChEBI" id="CHEBI:30616"/>
    </ligand>
</feature>
<proteinExistence type="inferred from homology"/>
<organism>
    <name type="scientific">Oryza sativa subsp. japonica</name>
    <name type="common">Rice</name>
    <dbReference type="NCBI Taxonomy" id="39947"/>
    <lineage>
        <taxon>Eukaryota</taxon>
        <taxon>Viridiplantae</taxon>
        <taxon>Streptophyta</taxon>
        <taxon>Embryophyta</taxon>
        <taxon>Tracheophyta</taxon>
        <taxon>Spermatophyta</taxon>
        <taxon>Magnoliopsida</taxon>
        <taxon>Liliopsida</taxon>
        <taxon>Poales</taxon>
        <taxon>Poaceae</taxon>
        <taxon>BOP clade</taxon>
        <taxon>Oryzoideae</taxon>
        <taxon>Oryzeae</taxon>
        <taxon>Oryzinae</taxon>
        <taxon>Oryza</taxon>
        <taxon>Oryza sativa</taxon>
    </lineage>
</organism>
<accession>B9GE13</accession>
<accession>A0A0P0YBR9</accession>
<accession>Q0IM79</accession>
<accession>Q2QMU6</accession>
<keyword id="KW-0067">ATP-binding</keyword>
<keyword id="KW-0175">Coiled coil</keyword>
<keyword id="KW-0493">Microtubule</keyword>
<keyword id="KW-0505">Motor protein</keyword>
<keyword id="KW-0547">Nucleotide-binding</keyword>
<keyword id="KW-1185">Reference proteome</keyword>
<gene>
    <name evidence="5" type="primary">KIN12F</name>
    <name evidence="7" type="ordered locus">Os12g0590500</name>
    <name evidence="6" type="ordered locus">LOC_Os12g39980</name>
    <name evidence="8" type="ORF">OsJ_36705</name>
</gene>